<keyword id="KW-0143">Chaperone</keyword>
<keyword id="KW-0963">Cytoplasm</keyword>
<keyword id="KW-0235">DNA replication</keyword>
<keyword id="KW-0479">Metal-binding</keyword>
<keyword id="KW-1185">Reference proteome</keyword>
<keyword id="KW-0677">Repeat</keyword>
<keyword id="KW-0346">Stress response</keyword>
<keyword id="KW-0862">Zinc</keyword>
<keyword id="KW-0863">Zinc-finger</keyword>
<accession>Q2J319</accession>
<protein>
    <recommendedName>
        <fullName evidence="1">Chaperone protein DnaJ</fullName>
    </recommendedName>
</protein>
<organism>
    <name type="scientific">Rhodopseudomonas palustris (strain HaA2)</name>
    <dbReference type="NCBI Taxonomy" id="316058"/>
    <lineage>
        <taxon>Bacteria</taxon>
        <taxon>Pseudomonadati</taxon>
        <taxon>Pseudomonadota</taxon>
        <taxon>Alphaproteobacteria</taxon>
        <taxon>Hyphomicrobiales</taxon>
        <taxon>Nitrobacteraceae</taxon>
        <taxon>Rhodopseudomonas</taxon>
    </lineage>
</organism>
<dbReference type="EMBL" id="CP000250">
    <property type="protein sequence ID" value="ABD05141.1"/>
    <property type="molecule type" value="Genomic_DNA"/>
</dbReference>
<dbReference type="RefSeq" id="WP_011439331.1">
    <property type="nucleotide sequence ID" value="NC_007778.1"/>
</dbReference>
<dbReference type="SMR" id="Q2J319"/>
<dbReference type="STRING" id="316058.RPB_0430"/>
<dbReference type="KEGG" id="rpb:RPB_0430"/>
<dbReference type="eggNOG" id="COG0484">
    <property type="taxonomic scope" value="Bacteria"/>
</dbReference>
<dbReference type="HOGENOM" id="CLU_017633_0_7_5"/>
<dbReference type="OrthoDB" id="9779889at2"/>
<dbReference type="Proteomes" id="UP000008809">
    <property type="component" value="Chromosome"/>
</dbReference>
<dbReference type="GO" id="GO:0005737">
    <property type="term" value="C:cytoplasm"/>
    <property type="evidence" value="ECO:0007669"/>
    <property type="project" value="UniProtKB-SubCell"/>
</dbReference>
<dbReference type="GO" id="GO:0005524">
    <property type="term" value="F:ATP binding"/>
    <property type="evidence" value="ECO:0007669"/>
    <property type="project" value="InterPro"/>
</dbReference>
<dbReference type="GO" id="GO:0031072">
    <property type="term" value="F:heat shock protein binding"/>
    <property type="evidence" value="ECO:0007669"/>
    <property type="project" value="InterPro"/>
</dbReference>
<dbReference type="GO" id="GO:0051082">
    <property type="term" value="F:unfolded protein binding"/>
    <property type="evidence" value="ECO:0007669"/>
    <property type="project" value="UniProtKB-UniRule"/>
</dbReference>
<dbReference type="GO" id="GO:0008270">
    <property type="term" value="F:zinc ion binding"/>
    <property type="evidence" value="ECO:0007669"/>
    <property type="project" value="UniProtKB-UniRule"/>
</dbReference>
<dbReference type="GO" id="GO:0051085">
    <property type="term" value="P:chaperone cofactor-dependent protein refolding"/>
    <property type="evidence" value="ECO:0007669"/>
    <property type="project" value="TreeGrafter"/>
</dbReference>
<dbReference type="GO" id="GO:0006260">
    <property type="term" value="P:DNA replication"/>
    <property type="evidence" value="ECO:0007669"/>
    <property type="project" value="UniProtKB-KW"/>
</dbReference>
<dbReference type="GO" id="GO:0042026">
    <property type="term" value="P:protein refolding"/>
    <property type="evidence" value="ECO:0007669"/>
    <property type="project" value="TreeGrafter"/>
</dbReference>
<dbReference type="GO" id="GO:0009408">
    <property type="term" value="P:response to heat"/>
    <property type="evidence" value="ECO:0007669"/>
    <property type="project" value="InterPro"/>
</dbReference>
<dbReference type="CDD" id="cd06257">
    <property type="entry name" value="DnaJ"/>
    <property type="match status" value="1"/>
</dbReference>
<dbReference type="CDD" id="cd10747">
    <property type="entry name" value="DnaJ_C"/>
    <property type="match status" value="1"/>
</dbReference>
<dbReference type="CDD" id="cd10719">
    <property type="entry name" value="DnaJ_zf"/>
    <property type="match status" value="1"/>
</dbReference>
<dbReference type="FunFam" id="1.10.287.110:FF:000034">
    <property type="entry name" value="Chaperone protein DnaJ"/>
    <property type="match status" value="1"/>
</dbReference>
<dbReference type="FunFam" id="2.10.230.10:FF:000002">
    <property type="entry name" value="Molecular chaperone DnaJ"/>
    <property type="match status" value="1"/>
</dbReference>
<dbReference type="FunFam" id="2.60.260.20:FF:000004">
    <property type="entry name" value="Molecular chaperone DnaJ"/>
    <property type="match status" value="1"/>
</dbReference>
<dbReference type="Gene3D" id="1.10.287.110">
    <property type="entry name" value="DnaJ domain"/>
    <property type="match status" value="1"/>
</dbReference>
<dbReference type="Gene3D" id="2.10.230.10">
    <property type="entry name" value="Heat shock protein DnaJ, cysteine-rich domain"/>
    <property type="match status" value="1"/>
</dbReference>
<dbReference type="Gene3D" id="2.60.260.20">
    <property type="entry name" value="Urease metallochaperone UreE, N-terminal domain"/>
    <property type="match status" value="2"/>
</dbReference>
<dbReference type="HAMAP" id="MF_01152">
    <property type="entry name" value="DnaJ"/>
    <property type="match status" value="1"/>
</dbReference>
<dbReference type="InterPro" id="IPR012724">
    <property type="entry name" value="DnaJ"/>
</dbReference>
<dbReference type="InterPro" id="IPR002939">
    <property type="entry name" value="DnaJ_C"/>
</dbReference>
<dbReference type="InterPro" id="IPR001623">
    <property type="entry name" value="DnaJ_domain"/>
</dbReference>
<dbReference type="InterPro" id="IPR018253">
    <property type="entry name" value="DnaJ_domain_CS"/>
</dbReference>
<dbReference type="InterPro" id="IPR008971">
    <property type="entry name" value="HSP40/DnaJ_pept-bd"/>
</dbReference>
<dbReference type="InterPro" id="IPR001305">
    <property type="entry name" value="HSP_DnaJ_Cys-rich_dom"/>
</dbReference>
<dbReference type="InterPro" id="IPR036410">
    <property type="entry name" value="HSP_DnaJ_Cys-rich_dom_sf"/>
</dbReference>
<dbReference type="InterPro" id="IPR036869">
    <property type="entry name" value="J_dom_sf"/>
</dbReference>
<dbReference type="NCBIfam" id="TIGR02349">
    <property type="entry name" value="DnaJ_bact"/>
    <property type="match status" value="1"/>
</dbReference>
<dbReference type="NCBIfam" id="NF008035">
    <property type="entry name" value="PRK10767.1"/>
    <property type="match status" value="1"/>
</dbReference>
<dbReference type="PANTHER" id="PTHR43096:SF48">
    <property type="entry name" value="CHAPERONE PROTEIN DNAJ"/>
    <property type="match status" value="1"/>
</dbReference>
<dbReference type="PANTHER" id="PTHR43096">
    <property type="entry name" value="DNAJ HOMOLOG 1, MITOCHONDRIAL-RELATED"/>
    <property type="match status" value="1"/>
</dbReference>
<dbReference type="Pfam" id="PF00226">
    <property type="entry name" value="DnaJ"/>
    <property type="match status" value="1"/>
</dbReference>
<dbReference type="Pfam" id="PF01556">
    <property type="entry name" value="DnaJ_C"/>
    <property type="match status" value="1"/>
</dbReference>
<dbReference type="Pfam" id="PF00684">
    <property type="entry name" value="DnaJ_CXXCXGXG"/>
    <property type="match status" value="1"/>
</dbReference>
<dbReference type="PRINTS" id="PR00625">
    <property type="entry name" value="JDOMAIN"/>
</dbReference>
<dbReference type="SMART" id="SM00271">
    <property type="entry name" value="DnaJ"/>
    <property type="match status" value="1"/>
</dbReference>
<dbReference type="SUPFAM" id="SSF46565">
    <property type="entry name" value="Chaperone J-domain"/>
    <property type="match status" value="1"/>
</dbReference>
<dbReference type="SUPFAM" id="SSF57938">
    <property type="entry name" value="DnaJ/Hsp40 cysteine-rich domain"/>
    <property type="match status" value="1"/>
</dbReference>
<dbReference type="SUPFAM" id="SSF49493">
    <property type="entry name" value="HSP40/DnaJ peptide-binding domain"/>
    <property type="match status" value="2"/>
</dbReference>
<dbReference type="PROSITE" id="PS00636">
    <property type="entry name" value="DNAJ_1"/>
    <property type="match status" value="1"/>
</dbReference>
<dbReference type="PROSITE" id="PS50076">
    <property type="entry name" value="DNAJ_2"/>
    <property type="match status" value="1"/>
</dbReference>
<dbReference type="PROSITE" id="PS51188">
    <property type="entry name" value="ZF_CR"/>
    <property type="match status" value="1"/>
</dbReference>
<comment type="function">
    <text evidence="1">Participates actively in the response to hyperosmotic and heat shock by preventing the aggregation of stress-denatured proteins and by disaggregating proteins, also in an autonomous, DnaK-independent fashion. Unfolded proteins bind initially to DnaJ; upon interaction with the DnaJ-bound protein, DnaK hydrolyzes its bound ATP, resulting in the formation of a stable complex. GrpE releases ADP from DnaK; ATP binding to DnaK triggers the release of the substrate protein, thus completing the reaction cycle. Several rounds of ATP-dependent interactions between DnaJ, DnaK and GrpE are required for fully efficient folding. Also involved, together with DnaK and GrpE, in the DNA replication of plasmids through activation of initiation proteins.</text>
</comment>
<comment type="cofactor">
    <cofactor evidence="1">
        <name>Zn(2+)</name>
        <dbReference type="ChEBI" id="CHEBI:29105"/>
    </cofactor>
    <text evidence="1">Binds 2 Zn(2+) ions per monomer.</text>
</comment>
<comment type="subunit">
    <text evidence="1">Homodimer.</text>
</comment>
<comment type="subcellular location">
    <subcellularLocation>
        <location evidence="1">Cytoplasm</location>
    </subcellularLocation>
</comment>
<comment type="domain">
    <text evidence="1">The J domain is necessary and sufficient to stimulate DnaK ATPase activity. Zinc center 1 plays an important role in the autonomous, DnaK-independent chaperone activity of DnaJ. Zinc center 2 is essential for interaction with DnaK and for DnaJ activity.</text>
</comment>
<comment type="similarity">
    <text evidence="1">Belongs to the DnaJ family.</text>
</comment>
<reference key="1">
    <citation type="submission" date="2006-01" db="EMBL/GenBank/DDBJ databases">
        <title>Complete sequence of Rhodopseudomonas palustris HaA2.</title>
        <authorList>
            <consortium name="US DOE Joint Genome Institute"/>
            <person name="Copeland A."/>
            <person name="Lucas S."/>
            <person name="Lapidus A."/>
            <person name="Barry K."/>
            <person name="Detter J.C."/>
            <person name="Glavina T."/>
            <person name="Hammon N."/>
            <person name="Israni S."/>
            <person name="Pitluck S."/>
            <person name="Chain P."/>
            <person name="Malfatti S."/>
            <person name="Shin M."/>
            <person name="Vergez L."/>
            <person name="Schmutz J."/>
            <person name="Larimer F."/>
            <person name="Land M."/>
            <person name="Hauser L."/>
            <person name="Pelletier D.A."/>
            <person name="Kyrpides N."/>
            <person name="Anderson I."/>
            <person name="Oda Y."/>
            <person name="Harwood C.S."/>
            <person name="Richardson P."/>
        </authorList>
    </citation>
    <scope>NUCLEOTIDE SEQUENCE [LARGE SCALE GENOMIC DNA]</scope>
    <source>
        <strain>HaA2</strain>
    </source>
</reference>
<gene>
    <name evidence="1" type="primary">dnaJ</name>
    <name type="ordered locus">RPB_0430</name>
</gene>
<proteinExistence type="inferred from homology"/>
<sequence>MSTTKRCYYETLEVERSADESTLKSAFRKLAMKWHPDRNPGDASSEIKFKEINEAYEVLKDGDKRAAYDRYGHAAFEQGMGGGGPGFGAGFASSFSDIFEDLFGMAGQRGRGTGRERGADLRYNMEITLEDAYKGKTAQIEIPVSVTCESCSGTGAKAGTKPKTCSTCGGAGRVRQAQGFFTLERTCPSCQGRGQIIEDPCPSCTGSGRVTKERTLSVNIPQGVEDGTRIRLAGEGEAGVRGGPPGDLYIFLSLASHAIFQRDGADLHCRVPISMVTAALGGEFEVPTIERGKTKVKVPSGTQTGRRFRIAGKGMPVLRSRQVGDMYVQVAVETPQNLTKKQQELLAEFEKLSSGATQPEAAGFFSKVKDFFGSRANTP</sequence>
<feature type="chain" id="PRO_1000085266" description="Chaperone protein DnaJ">
    <location>
        <begin position="1"/>
        <end position="379"/>
    </location>
</feature>
<feature type="domain" description="J" evidence="1">
    <location>
        <begin position="7"/>
        <end position="72"/>
    </location>
</feature>
<feature type="repeat" description="CXXCXGXG motif">
    <location>
        <begin position="148"/>
        <end position="155"/>
    </location>
</feature>
<feature type="repeat" description="CXXCXGXG motif">
    <location>
        <begin position="165"/>
        <end position="172"/>
    </location>
</feature>
<feature type="repeat" description="CXXCXGXG motif">
    <location>
        <begin position="187"/>
        <end position="194"/>
    </location>
</feature>
<feature type="repeat" description="CXXCXGXG motif">
    <location>
        <begin position="201"/>
        <end position="208"/>
    </location>
</feature>
<feature type="zinc finger region" description="CR-type" evidence="1">
    <location>
        <begin position="135"/>
        <end position="213"/>
    </location>
</feature>
<feature type="binding site" evidence="1">
    <location>
        <position position="148"/>
    </location>
    <ligand>
        <name>Zn(2+)</name>
        <dbReference type="ChEBI" id="CHEBI:29105"/>
        <label>1</label>
    </ligand>
</feature>
<feature type="binding site" evidence="1">
    <location>
        <position position="151"/>
    </location>
    <ligand>
        <name>Zn(2+)</name>
        <dbReference type="ChEBI" id="CHEBI:29105"/>
        <label>1</label>
    </ligand>
</feature>
<feature type="binding site" evidence="1">
    <location>
        <position position="165"/>
    </location>
    <ligand>
        <name>Zn(2+)</name>
        <dbReference type="ChEBI" id="CHEBI:29105"/>
        <label>2</label>
    </ligand>
</feature>
<feature type="binding site" evidence="1">
    <location>
        <position position="168"/>
    </location>
    <ligand>
        <name>Zn(2+)</name>
        <dbReference type="ChEBI" id="CHEBI:29105"/>
        <label>2</label>
    </ligand>
</feature>
<feature type="binding site" evidence="1">
    <location>
        <position position="187"/>
    </location>
    <ligand>
        <name>Zn(2+)</name>
        <dbReference type="ChEBI" id="CHEBI:29105"/>
        <label>2</label>
    </ligand>
</feature>
<feature type="binding site" evidence="1">
    <location>
        <position position="190"/>
    </location>
    <ligand>
        <name>Zn(2+)</name>
        <dbReference type="ChEBI" id="CHEBI:29105"/>
        <label>2</label>
    </ligand>
</feature>
<feature type="binding site" evidence="1">
    <location>
        <position position="201"/>
    </location>
    <ligand>
        <name>Zn(2+)</name>
        <dbReference type="ChEBI" id="CHEBI:29105"/>
        <label>1</label>
    </ligand>
</feature>
<feature type="binding site" evidence="1">
    <location>
        <position position="204"/>
    </location>
    <ligand>
        <name>Zn(2+)</name>
        <dbReference type="ChEBI" id="CHEBI:29105"/>
        <label>1</label>
    </ligand>
</feature>
<evidence type="ECO:0000255" key="1">
    <source>
        <dbReference type="HAMAP-Rule" id="MF_01152"/>
    </source>
</evidence>
<name>DNAJ_RHOP2</name>